<proteinExistence type="inferred from homology"/>
<comment type="catalytic activity">
    <reaction>
        <text>a 2'-deoxyadenosine in DNA + S-adenosyl-L-methionine = an N(6)-methyl-2'-deoxyadenosine in DNA + S-adenosyl-L-homocysteine + H(+)</text>
        <dbReference type="Rhea" id="RHEA:15197"/>
        <dbReference type="Rhea" id="RHEA-COMP:12418"/>
        <dbReference type="Rhea" id="RHEA-COMP:12419"/>
        <dbReference type="ChEBI" id="CHEBI:15378"/>
        <dbReference type="ChEBI" id="CHEBI:57856"/>
        <dbReference type="ChEBI" id="CHEBI:59789"/>
        <dbReference type="ChEBI" id="CHEBI:90615"/>
        <dbReference type="ChEBI" id="CHEBI:90616"/>
        <dbReference type="EC" id="2.1.1.72"/>
    </reaction>
</comment>
<comment type="similarity">
    <text evidence="1">Belongs to the N(4)/N(6)-methyltransferase family.</text>
</comment>
<feature type="chain" id="PRO_0000088017" description="Uncharacterized adenine-specific methylase MPN_111">
    <location>
        <begin position="1"/>
        <end position="422"/>
    </location>
</feature>
<dbReference type="EC" id="2.1.1.72"/>
<dbReference type="EMBL" id="U00089">
    <property type="protein sequence ID" value="AAB95691.1"/>
    <property type="molecule type" value="Genomic_DNA"/>
</dbReference>
<dbReference type="PIR" id="S73369">
    <property type="entry name" value="S73369"/>
</dbReference>
<dbReference type="RefSeq" id="NP_109799.1">
    <property type="nucleotide sequence ID" value="NC_000912.1"/>
</dbReference>
<dbReference type="RefSeq" id="WP_010874468.1">
    <property type="nucleotide sequence ID" value="NC_000912.1"/>
</dbReference>
<dbReference type="STRING" id="272634.MPN_111"/>
<dbReference type="EnsemblBacteria" id="AAB95691">
    <property type="protein sequence ID" value="AAB95691"/>
    <property type="gene ID" value="MPN_111"/>
</dbReference>
<dbReference type="KEGG" id="mpn:MPN_111"/>
<dbReference type="PATRIC" id="fig|272634.6.peg.118"/>
<dbReference type="HOGENOM" id="CLU_650238_0_0_14"/>
<dbReference type="OrthoDB" id="9800643at2"/>
<dbReference type="BioCyc" id="MPNE272634:G1GJ3-189-MONOMER"/>
<dbReference type="Proteomes" id="UP000000808">
    <property type="component" value="Chromosome"/>
</dbReference>
<dbReference type="GO" id="GO:0003676">
    <property type="term" value="F:nucleic acid binding"/>
    <property type="evidence" value="ECO:0007669"/>
    <property type="project" value="InterPro"/>
</dbReference>
<dbReference type="GO" id="GO:0009007">
    <property type="term" value="F:site-specific DNA-methyltransferase (adenine-specific) activity"/>
    <property type="evidence" value="ECO:0007669"/>
    <property type="project" value="UniProtKB-EC"/>
</dbReference>
<dbReference type="GO" id="GO:0006304">
    <property type="term" value="P:DNA modification"/>
    <property type="evidence" value="ECO:0007669"/>
    <property type="project" value="InterPro"/>
</dbReference>
<dbReference type="GO" id="GO:0032259">
    <property type="term" value="P:methylation"/>
    <property type="evidence" value="ECO:0007669"/>
    <property type="project" value="UniProtKB-KW"/>
</dbReference>
<dbReference type="Gene3D" id="3.40.50.150">
    <property type="entry name" value="Vaccinia Virus protein VP39"/>
    <property type="match status" value="1"/>
</dbReference>
<dbReference type="InterPro" id="IPR002052">
    <property type="entry name" value="DNA_methylase_N6_adenine_CS"/>
</dbReference>
<dbReference type="InterPro" id="IPR011639">
    <property type="entry name" value="MethylTrfase_TaqI-like_dom"/>
</dbReference>
<dbReference type="InterPro" id="IPR029063">
    <property type="entry name" value="SAM-dependent_MTases_sf"/>
</dbReference>
<dbReference type="Pfam" id="PF07669">
    <property type="entry name" value="Eco57I"/>
    <property type="match status" value="1"/>
</dbReference>
<dbReference type="SUPFAM" id="SSF53335">
    <property type="entry name" value="S-adenosyl-L-methionine-dependent methyltransferases"/>
    <property type="match status" value="1"/>
</dbReference>
<dbReference type="PROSITE" id="PS00092">
    <property type="entry name" value="N6_MTASE"/>
    <property type="match status" value="1"/>
</dbReference>
<name>Y111_MYCPN</name>
<sequence>MNKNSGKDYESIQGKIKSKAEIEDSVILDQDTFQGKGEEKTKLDELIRWEAEKNDLLKLIDNVGNDEVFTPVETCQRMLDELFPEDHEVWSNPDLKWLNPCDKNGVFFREIALRLDKGLTKIIPDEYARKKHIMTKMLFSIGLTKFTSLMVRRTLYYCIKANKRKTSEDEGCAIANGARFNNEFGNVVTPYKEHYFGKESKSKNCHFCGTNKNSKYVNSMTEEKYAYDFIHLNSDEYENYFKTNFGVMKFDVIIGNPPYQLSNGSGSDGNGAKAIFQDFVLKAIDLEPKYLAMIIPAKWMISAENIFLNLRDKLKKNKDIKEINIFFDSKDCFPKREIKGGICYFIWQNNYQGKTLINTKFSKKGKSTEIDSSKRNLFVSVLNNTEQIIFRKRIWQDIYTKIDSISASEMKNTHTEREQFRS</sequence>
<accession>P75451</accession>
<evidence type="ECO:0000305" key="1"/>
<gene>
    <name type="ordered locus">MPN_111</name>
    <name type="ORF">C09_orf422</name>
    <name type="ORF">MP043</name>
</gene>
<protein>
    <recommendedName>
        <fullName>Uncharacterized adenine-specific methylase MPN_111</fullName>
        <ecNumber>2.1.1.72</ecNumber>
    </recommendedName>
</protein>
<reference key="1">
    <citation type="journal article" date="1996" name="Nucleic Acids Res.">
        <title>Complete sequence analysis of the genome of the bacterium Mycoplasma pneumoniae.</title>
        <authorList>
            <person name="Himmelreich R."/>
            <person name="Hilbert H."/>
            <person name="Plagens H."/>
            <person name="Pirkl E."/>
            <person name="Li B.-C."/>
            <person name="Herrmann R."/>
        </authorList>
    </citation>
    <scope>NUCLEOTIDE SEQUENCE [LARGE SCALE GENOMIC DNA]</scope>
    <source>
        <strain>ATCC 29342 / M129 / Subtype 1</strain>
    </source>
</reference>
<organism>
    <name type="scientific">Mycoplasma pneumoniae (strain ATCC 29342 / M129 / Subtype 1)</name>
    <name type="common">Mycoplasmoides pneumoniae</name>
    <dbReference type="NCBI Taxonomy" id="272634"/>
    <lineage>
        <taxon>Bacteria</taxon>
        <taxon>Bacillati</taxon>
        <taxon>Mycoplasmatota</taxon>
        <taxon>Mycoplasmoidales</taxon>
        <taxon>Mycoplasmoidaceae</taxon>
        <taxon>Mycoplasmoides</taxon>
    </lineage>
</organism>
<keyword id="KW-0489">Methyltransferase</keyword>
<keyword id="KW-1185">Reference proteome</keyword>
<keyword id="KW-0949">S-adenosyl-L-methionine</keyword>
<keyword id="KW-0808">Transferase</keyword>